<sequence length="309" mass="33699">MMILKNKRMLKIGICVGILGLSITSLEAFTGGALQVEAKQKTGQVKHKNQATHKEFSQLEKKFDARVGVYAIDTGTNQTISYRSNERFAFASTYKALAAGVLLQQNSIDTLNEVITFTKEDLVDYSPVTEKHVDTGMKLGEIAEAAVRSSDNTAGNILFNKIGGPKGYEKALRKMGDRVTMSDRFETELNEAIPGDIRDTSTAKRIATNLKAFTVGNALPAEKRKILTEWMKGNATGDKLIRAGVPTDWVVGDKSGAGSYGTRNDIAIVWPPNRAPIIIAILSSKDEKEASYDNQLIAEATEVIVKALK</sequence>
<organism>
    <name type="scientific">Bacillus thuringiensis</name>
    <dbReference type="NCBI Taxonomy" id="1428"/>
    <lineage>
        <taxon>Bacteria</taxon>
        <taxon>Bacillati</taxon>
        <taxon>Bacillota</taxon>
        <taxon>Bacilli</taxon>
        <taxon>Bacillales</taxon>
        <taxon>Bacillaceae</taxon>
        <taxon>Bacillus</taxon>
        <taxon>Bacillus cereus group</taxon>
    </lineage>
</organism>
<keyword id="KW-0046">Antibiotic resistance</keyword>
<keyword id="KW-0378">Hydrolase</keyword>
<keyword id="KW-0732">Signal</keyword>
<proteinExistence type="inferred from homology"/>
<protein>
    <recommendedName>
        <fullName>Beta-lactamase</fullName>
        <ecNumber>3.5.2.6</ecNumber>
    </recommendedName>
    <alternativeName>
        <fullName>Penicillinase</fullName>
    </alternativeName>
</protein>
<comment type="function">
    <text>This protein is a beta-lactamase with a substrate specificity for penicillins.</text>
</comment>
<comment type="catalytic activity">
    <reaction evidence="3">
        <text>a beta-lactam + H2O = a substituted beta-amino acid</text>
        <dbReference type="Rhea" id="RHEA:20401"/>
        <dbReference type="ChEBI" id="CHEBI:15377"/>
        <dbReference type="ChEBI" id="CHEBI:35627"/>
        <dbReference type="ChEBI" id="CHEBI:140347"/>
        <dbReference type="EC" id="3.5.2.6"/>
    </reaction>
</comment>
<comment type="miscellaneous">
    <text evidence="5">The class A beta-lactamase family has a specific amino-acid numbering system, sometimes called Ambler or ABL numbering and often misspelt as Amber. A multiple sequence alignment was used to derive a consensus sequence and then the consensus was numbered taking into account insertions and deletions. This allows use of identical numbers, e.g. for active site residues, despite differences in protein length. UniProt always uses natural numbering of residues, hence there appear to be differences in numbering between this entry and some papers.</text>
</comment>
<comment type="similarity">
    <text evidence="4">Belongs to the class-A beta-lactamase family.</text>
</comment>
<evidence type="ECO:0000250" key="1"/>
<evidence type="ECO:0000255" key="2"/>
<evidence type="ECO:0000255" key="3">
    <source>
        <dbReference type="PROSITE-ProRule" id="PRU10101"/>
    </source>
</evidence>
<evidence type="ECO:0000305" key="4"/>
<evidence type="ECO:0000305" key="5">
    <source>
    </source>
</evidence>
<reference key="1">
    <citation type="journal article" date="1995" name="Gene">
        <title>Cloning and sequencing of a beta-lactamase-encoding gene from the insect pathogen Bacillus thuringiensis.</title>
        <authorList>
            <person name="Zhang M.-Y."/>
            <person name="Loevgren A."/>
        </authorList>
    </citation>
    <scope>NUCLEOTIDE SEQUENCE [GENOMIC DNA]</scope>
    <source>
        <strain>Bt13</strain>
    </source>
</reference>
<reference key="2">
    <citation type="journal article" date="1991" name="Biochem. J.">
        <title>A standard numbering scheme for the class A beta-lactamases.</title>
        <authorList>
            <person name="Ambler R.P."/>
            <person name="Coulson A.F."/>
            <person name="Frere J.M."/>
            <person name="Ghuysen J.M."/>
            <person name="Joris B."/>
            <person name="Forsman M."/>
            <person name="Levesque R.C."/>
            <person name="Tiraby G."/>
            <person name="Waley S.G."/>
        </authorList>
    </citation>
    <scope>AMINO ACID NUMBERING SCHEME</scope>
</reference>
<accession>Q45726</accession>
<feature type="signal peptide" evidence="2">
    <location>
        <begin position="1"/>
        <end position="28"/>
    </location>
</feature>
<feature type="chain" id="PRO_0000016976" description="Beta-lactamase">
    <location>
        <begin position="29"/>
        <end position="309"/>
    </location>
</feature>
<feature type="active site" description="Acyl-ester intermediate" evidence="3">
    <location>
        <position position="92"/>
    </location>
</feature>
<feature type="active site" description="Proton acceptor" evidence="1">
    <location>
        <position position="188"/>
    </location>
</feature>
<feature type="binding site" evidence="1">
    <location>
        <begin position="254"/>
        <end position="256"/>
    </location>
    <ligand>
        <name>substrate</name>
    </ligand>
</feature>
<dbReference type="EC" id="3.5.2.6"/>
<dbReference type="EMBL" id="X83424">
    <property type="protein sequence ID" value="CAA58448.1"/>
    <property type="molecule type" value="Genomic_DNA"/>
</dbReference>
<dbReference type="PIR" id="JC4117">
    <property type="entry name" value="JC4117"/>
</dbReference>
<dbReference type="SMR" id="Q45726"/>
<dbReference type="GO" id="GO:0008800">
    <property type="term" value="F:beta-lactamase activity"/>
    <property type="evidence" value="ECO:0007669"/>
    <property type="project" value="UniProtKB-EC"/>
</dbReference>
<dbReference type="GO" id="GO:0030655">
    <property type="term" value="P:beta-lactam antibiotic catabolic process"/>
    <property type="evidence" value="ECO:0007669"/>
    <property type="project" value="InterPro"/>
</dbReference>
<dbReference type="GO" id="GO:0046677">
    <property type="term" value="P:response to antibiotic"/>
    <property type="evidence" value="ECO:0007669"/>
    <property type="project" value="UniProtKB-KW"/>
</dbReference>
<dbReference type="Gene3D" id="3.40.710.10">
    <property type="entry name" value="DD-peptidase/beta-lactamase superfamily"/>
    <property type="match status" value="1"/>
</dbReference>
<dbReference type="InterPro" id="IPR012338">
    <property type="entry name" value="Beta-lactam/transpept-like"/>
</dbReference>
<dbReference type="InterPro" id="IPR045155">
    <property type="entry name" value="Beta-lactam_cat"/>
</dbReference>
<dbReference type="InterPro" id="IPR000871">
    <property type="entry name" value="Beta-lactam_class-A"/>
</dbReference>
<dbReference type="InterPro" id="IPR023650">
    <property type="entry name" value="Beta-lactam_class-A_AS"/>
</dbReference>
<dbReference type="NCBIfam" id="NF033096">
    <property type="entry name" value="bla1"/>
    <property type="match status" value="1"/>
</dbReference>
<dbReference type="NCBIfam" id="NF033103">
    <property type="entry name" value="bla_class_A"/>
    <property type="match status" value="1"/>
</dbReference>
<dbReference type="NCBIfam" id="NF012167">
    <property type="entry name" value="classA_firm"/>
    <property type="match status" value="1"/>
</dbReference>
<dbReference type="PANTHER" id="PTHR35333">
    <property type="entry name" value="BETA-LACTAMASE"/>
    <property type="match status" value="1"/>
</dbReference>
<dbReference type="PANTHER" id="PTHR35333:SF3">
    <property type="entry name" value="BETA-LACTAMASE-TYPE TRANSPEPTIDASE FOLD CONTAINING PROTEIN"/>
    <property type="match status" value="1"/>
</dbReference>
<dbReference type="Pfam" id="PF13354">
    <property type="entry name" value="Beta-lactamase2"/>
    <property type="match status" value="1"/>
</dbReference>
<dbReference type="PRINTS" id="PR00118">
    <property type="entry name" value="BLACTAMASEA"/>
</dbReference>
<dbReference type="SUPFAM" id="SSF56601">
    <property type="entry name" value="beta-lactamase/transpeptidase-like"/>
    <property type="match status" value="1"/>
</dbReference>
<dbReference type="PROSITE" id="PS00146">
    <property type="entry name" value="BETA_LACTAMASE_A"/>
    <property type="match status" value="1"/>
</dbReference>
<name>BLAC_BACTU</name>
<gene>
    <name type="primary">bla</name>
</gene>